<feature type="initiator methionine" description="Removed" evidence="3">
    <location>
        <position position="1"/>
    </location>
</feature>
<feature type="chain" id="PRO_0000064273" description="Catenin beta-1">
    <location>
        <begin position="2"/>
        <end position="781"/>
    </location>
</feature>
<feature type="repeat" description="ARM 1">
    <location>
        <begin position="151"/>
        <end position="191"/>
    </location>
</feature>
<feature type="repeat" description="ARM 2">
    <location>
        <begin position="193"/>
        <end position="234"/>
    </location>
</feature>
<feature type="repeat" description="ARM 3">
    <location>
        <begin position="235"/>
        <end position="276"/>
    </location>
</feature>
<feature type="repeat" description="ARM 4">
    <location>
        <begin position="277"/>
        <end position="318"/>
    </location>
</feature>
<feature type="repeat" description="ARM 5">
    <location>
        <begin position="319"/>
        <end position="360"/>
    </location>
</feature>
<feature type="repeat" description="ARM 6">
    <location>
        <begin position="361"/>
        <end position="389"/>
    </location>
</feature>
<feature type="repeat" description="ARM 7">
    <location>
        <begin position="400"/>
        <end position="441"/>
    </location>
</feature>
<feature type="repeat" description="ARM 8">
    <location>
        <begin position="442"/>
        <end position="484"/>
    </location>
</feature>
<feature type="repeat" description="ARM 9">
    <location>
        <begin position="489"/>
        <end position="530"/>
    </location>
</feature>
<feature type="repeat" description="ARM 10">
    <location>
        <begin position="531"/>
        <end position="571"/>
    </location>
</feature>
<feature type="repeat" description="ARM 11">
    <location>
        <begin position="594"/>
        <end position="636"/>
    </location>
</feature>
<feature type="repeat" description="ARM 12">
    <location>
        <begin position="637"/>
        <end position="666"/>
    </location>
</feature>
<feature type="region of interest" description="Interaction with VCL" evidence="1">
    <location>
        <begin position="2"/>
        <end position="23"/>
    </location>
</feature>
<feature type="region of interest" description="Disordered" evidence="6">
    <location>
        <begin position="34"/>
        <end position="57"/>
    </location>
</feature>
<feature type="region of interest" description="Interaction with BCL9" evidence="1">
    <location>
        <begin position="156"/>
        <end position="178"/>
    </location>
</feature>
<feature type="region of interest" description="Disordered" evidence="6">
    <location>
        <begin position="720"/>
        <end position="781"/>
    </location>
</feature>
<feature type="region of interest" description="Interaction with SCRIB" evidence="1">
    <location>
        <begin position="772"/>
        <end position="781"/>
    </location>
</feature>
<feature type="compositionally biased region" description="Basic and acidic residues" evidence="6">
    <location>
        <begin position="734"/>
        <end position="745"/>
    </location>
</feature>
<feature type="modified residue" description="N-acetylalanine" evidence="3">
    <location>
        <position position="2"/>
    </location>
</feature>
<feature type="modified residue" description="Phosphoserine; by GSK3-beta; alternate" evidence="3">
    <location>
        <position position="23"/>
    </location>
</feature>
<feature type="modified residue" description="Phosphoserine; by GSK3-beta" evidence="3">
    <location>
        <position position="29"/>
    </location>
</feature>
<feature type="modified residue" description="Phosphoserine; by GSK3-beta and HIPK2" evidence="3">
    <location>
        <position position="33"/>
    </location>
</feature>
<feature type="modified residue" description="Phosphoserine; by GSK3-beta and HIPK2" evidence="3">
    <location>
        <position position="37"/>
    </location>
</feature>
<feature type="modified residue" description="Phosphothreonine; by GSK3-beta" evidence="3">
    <location>
        <position position="41"/>
    </location>
</feature>
<feature type="modified residue" description="Phosphoserine" evidence="3">
    <location>
        <position position="45"/>
    </location>
</feature>
<feature type="modified residue" description="N6-acetyllysine" evidence="3">
    <location>
        <position position="49"/>
    </location>
</feature>
<feature type="modified residue" description="Phosphotyrosine; by PTK6" evidence="3">
    <location>
        <position position="64"/>
    </location>
</feature>
<feature type="modified residue" description="Phosphotyrosine; by FYN and PTK6" evidence="3">
    <location>
        <position position="142"/>
    </location>
</feature>
<feature type="modified residue" description="Phosphoserine" evidence="14">
    <location>
        <position position="191"/>
    </location>
</feature>
<feature type="modified residue" description="Phosphoserine; by CDK5" evidence="3">
    <location>
        <position position="246"/>
    </location>
</feature>
<feature type="modified residue" description="Phosphotyrosine" evidence="3">
    <location>
        <position position="331"/>
    </location>
</feature>
<feature type="modified residue" description="Phosphotyrosine" evidence="3">
    <location>
        <position position="333"/>
    </location>
</feature>
<feature type="modified residue" description="Phosphoserine" evidence="14">
    <location>
        <position position="552"/>
    </location>
</feature>
<feature type="modified residue" description="Phosphothreonine" evidence="3">
    <location>
        <position position="556"/>
    </location>
</feature>
<feature type="modified residue" description="S-nitrosocysteine" evidence="4">
    <location>
        <position position="619"/>
    </location>
</feature>
<feature type="modified residue" description="Phosphoserine" evidence="13 14">
    <location>
        <position position="675"/>
    </location>
</feature>
<feature type="glycosylation site" description="O-linked (GlcNAc) serine; alternate" evidence="5">
    <location>
        <position position="23"/>
    </location>
</feature>
<feature type="sequence conflict" description="In Ref. 2; AAK85253." evidence="11" ref="2">
    <original>P</original>
    <variation>L</variation>
    <location>
        <position position="368"/>
    </location>
</feature>
<name>CTNB1_RAT</name>
<dbReference type="EMBL" id="AF121265">
    <property type="protein sequence ID" value="AAD28504.1"/>
    <property type="molecule type" value="mRNA"/>
</dbReference>
<dbReference type="EMBL" id="AF397179">
    <property type="protein sequence ID" value="AAK85253.1"/>
    <property type="molecule type" value="Genomic_DNA"/>
</dbReference>
<dbReference type="RefSeq" id="NP_445809.2">
    <property type="nucleotide sequence ID" value="NM_053357.2"/>
</dbReference>
<dbReference type="RefSeq" id="XP_008764913.1">
    <property type="nucleotide sequence ID" value="XM_008766691.2"/>
</dbReference>
<dbReference type="RefSeq" id="XP_017451425.1">
    <property type="nucleotide sequence ID" value="XM_017595936.1"/>
</dbReference>
<dbReference type="RefSeq" id="XP_017451426.1">
    <property type="nucleotide sequence ID" value="XM_017595937.1"/>
</dbReference>
<dbReference type="RefSeq" id="XP_017451428.1">
    <property type="nucleotide sequence ID" value="XM_017595939.1"/>
</dbReference>
<dbReference type="RefSeq" id="XP_017451429.1">
    <property type="nucleotide sequence ID" value="XM_017595940.1"/>
</dbReference>
<dbReference type="SMR" id="Q9WU82"/>
<dbReference type="BioGRID" id="249913">
    <property type="interactions" value="156"/>
</dbReference>
<dbReference type="CORUM" id="Q9WU82"/>
<dbReference type="DIP" id="DIP-37053N"/>
<dbReference type="FunCoup" id="Q9WU82">
    <property type="interactions" value="3594"/>
</dbReference>
<dbReference type="IntAct" id="Q9WU82">
    <property type="interactions" value="18"/>
</dbReference>
<dbReference type="MINT" id="Q9WU82"/>
<dbReference type="STRING" id="10116.ENSRNOP00000068620"/>
<dbReference type="GlyCosmos" id="Q9WU82">
    <property type="glycosylation" value="1 site, No reported glycans"/>
</dbReference>
<dbReference type="GlyGen" id="Q9WU82">
    <property type="glycosylation" value="1 site"/>
</dbReference>
<dbReference type="iPTMnet" id="Q9WU82"/>
<dbReference type="PhosphoSitePlus" id="Q9WU82"/>
<dbReference type="jPOST" id="Q9WU82"/>
<dbReference type="PaxDb" id="10116-ENSRNOP00000026016"/>
<dbReference type="GeneID" id="84353"/>
<dbReference type="KEGG" id="rno:84353"/>
<dbReference type="UCSC" id="RGD:70487">
    <property type="organism name" value="rat"/>
</dbReference>
<dbReference type="AGR" id="RGD:70487"/>
<dbReference type="CTD" id="1499"/>
<dbReference type="RGD" id="70487">
    <property type="gene designation" value="Ctnnb1"/>
</dbReference>
<dbReference type="eggNOG" id="KOG4203">
    <property type="taxonomic scope" value="Eukaryota"/>
</dbReference>
<dbReference type="InParanoid" id="Q9WU82"/>
<dbReference type="PhylomeDB" id="Q9WU82"/>
<dbReference type="TreeFam" id="TF317997"/>
<dbReference type="Reactome" id="R-RNO-195253">
    <property type="pathway name" value="Degradation of beta-catenin by the destruction complex"/>
</dbReference>
<dbReference type="Reactome" id="R-RNO-196299">
    <property type="pathway name" value="Beta-catenin phosphorylation cascade"/>
</dbReference>
<dbReference type="Reactome" id="R-RNO-201681">
    <property type="pathway name" value="TCF dependent signaling in response to WNT"/>
</dbReference>
<dbReference type="Reactome" id="R-RNO-201722">
    <property type="pathway name" value="Formation of the beta-catenin:TCF transactivating complex"/>
</dbReference>
<dbReference type="Reactome" id="R-RNO-3134973">
    <property type="pathway name" value="LRR FLII-interacting protein 1 (LRRFIP1) activates type I IFN production"/>
</dbReference>
<dbReference type="Reactome" id="R-RNO-351906">
    <property type="pathway name" value="Apoptotic cleavage of cell adhesion proteins"/>
</dbReference>
<dbReference type="Reactome" id="R-RNO-3769402">
    <property type="pathway name" value="Deactivation of the beta-catenin transactivating complex"/>
</dbReference>
<dbReference type="Reactome" id="R-RNO-4086398">
    <property type="pathway name" value="Ca2+ pathway"/>
</dbReference>
<dbReference type="Reactome" id="R-RNO-4641262">
    <property type="pathway name" value="Disassembly of the destruction complex and recruitment of AXIN to the membrane"/>
</dbReference>
<dbReference type="Reactome" id="R-RNO-5218920">
    <property type="pathway name" value="VEGFR2 mediated vascular permeability"/>
</dbReference>
<dbReference type="Reactome" id="R-RNO-525793">
    <property type="pathway name" value="Myogenesis"/>
</dbReference>
<dbReference type="Reactome" id="R-RNO-8951430">
    <property type="pathway name" value="RUNX3 regulates WNT signaling"/>
</dbReference>
<dbReference type="Reactome" id="R-RNO-9762292">
    <property type="pathway name" value="Regulation of CDH11 function"/>
</dbReference>
<dbReference type="Reactome" id="R-RNO-9825892">
    <property type="pathway name" value="Regulation of MITF-M-dependent genes involved in cell cycle and proliferation"/>
</dbReference>
<dbReference type="PRO" id="PR:Q9WU82"/>
<dbReference type="Proteomes" id="UP000002494">
    <property type="component" value="Unplaced"/>
</dbReference>
<dbReference type="GO" id="GO:0005912">
    <property type="term" value="C:adherens junction"/>
    <property type="evidence" value="ECO:0000314"/>
    <property type="project" value="RGD"/>
</dbReference>
<dbReference type="GO" id="GO:0043296">
    <property type="term" value="C:apical junction complex"/>
    <property type="evidence" value="ECO:0000266"/>
    <property type="project" value="RGD"/>
</dbReference>
<dbReference type="GO" id="GO:0045177">
    <property type="term" value="C:apical part of cell"/>
    <property type="evidence" value="ECO:0000266"/>
    <property type="project" value="RGD"/>
</dbReference>
<dbReference type="GO" id="GO:0016324">
    <property type="term" value="C:apical plasma membrane"/>
    <property type="evidence" value="ECO:0000314"/>
    <property type="project" value="RGD"/>
</dbReference>
<dbReference type="GO" id="GO:0016327">
    <property type="term" value="C:apicolateral plasma membrane"/>
    <property type="evidence" value="ECO:0000266"/>
    <property type="project" value="RGD"/>
</dbReference>
<dbReference type="GO" id="GO:0016323">
    <property type="term" value="C:basolateral plasma membrane"/>
    <property type="evidence" value="ECO:0000266"/>
    <property type="project" value="RGD"/>
</dbReference>
<dbReference type="GO" id="GO:0030877">
    <property type="term" value="C:beta-catenin destruction complex"/>
    <property type="evidence" value="ECO:0000250"/>
    <property type="project" value="UniProtKB"/>
</dbReference>
<dbReference type="GO" id="GO:1990711">
    <property type="term" value="C:beta-catenin-ICAT complex"/>
    <property type="evidence" value="ECO:0000266"/>
    <property type="project" value="RGD"/>
</dbReference>
<dbReference type="GO" id="GO:1990907">
    <property type="term" value="C:beta-catenin-TCF complex"/>
    <property type="evidence" value="ECO:0000266"/>
    <property type="project" value="RGD"/>
</dbReference>
<dbReference type="GO" id="GO:0070369">
    <property type="term" value="C:beta-catenin-TCF7L2 complex"/>
    <property type="evidence" value="ECO:0000250"/>
    <property type="project" value="UniProtKB"/>
</dbReference>
<dbReference type="GO" id="GO:0005923">
    <property type="term" value="C:bicellular tight junction"/>
    <property type="evidence" value="ECO:0000266"/>
    <property type="project" value="RGD"/>
</dbReference>
<dbReference type="GO" id="GO:0016342">
    <property type="term" value="C:catenin complex"/>
    <property type="evidence" value="ECO:0000250"/>
    <property type="project" value="UniProtKB"/>
</dbReference>
<dbReference type="GO" id="GO:0005938">
    <property type="term" value="C:cell cortex"/>
    <property type="evidence" value="ECO:0000250"/>
    <property type="project" value="UniProtKB"/>
</dbReference>
<dbReference type="GO" id="GO:0030054">
    <property type="term" value="C:cell junction"/>
    <property type="evidence" value="ECO:0000250"/>
    <property type="project" value="UniProtKB"/>
</dbReference>
<dbReference type="GO" id="GO:0071944">
    <property type="term" value="C:cell periphery"/>
    <property type="evidence" value="ECO:0000250"/>
    <property type="project" value="UniProtKB"/>
</dbReference>
<dbReference type="GO" id="GO:0031253">
    <property type="term" value="C:cell projection membrane"/>
    <property type="evidence" value="ECO:0000266"/>
    <property type="project" value="RGD"/>
</dbReference>
<dbReference type="GO" id="GO:0005911">
    <property type="term" value="C:cell-cell junction"/>
    <property type="evidence" value="ECO:0000250"/>
    <property type="project" value="UniProtKB"/>
</dbReference>
<dbReference type="GO" id="GO:0005813">
    <property type="term" value="C:centrosome"/>
    <property type="evidence" value="ECO:0000250"/>
    <property type="project" value="UniProtKB"/>
</dbReference>
<dbReference type="GO" id="GO:0005737">
    <property type="term" value="C:cytoplasm"/>
    <property type="evidence" value="ECO:0000314"/>
    <property type="project" value="ARUK-UCL"/>
</dbReference>
<dbReference type="GO" id="GO:0005829">
    <property type="term" value="C:cytosol"/>
    <property type="evidence" value="ECO:0000266"/>
    <property type="project" value="RGD"/>
</dbReference>
<dbReference type="GO" id="GO:0043198">
    <property type="term" value="C:dendritic shaft"/>
    <property type="evidence" value="ECO:0000314"/>
    <property type="project" value="RGD"/>
</dbReference>
<dbReference type="GO" id="GO:0000791">
    <property type="term" value="C:euchromatin"/>
    <property type="evidence" value="ECO:0000266"/>
    <property type="project" value="RGD"/>
</dbReference>
<dbReference type="GO" id="GO:0070382">
    <property type="term" value="C:exocytic vesicle"/>
    <property type="evidence" value="ECO:0000266"/>
    <property type="project" value="RGD"/>
</dbReference>
<dbReference type="GO" id="GO:0005916">
    <property type="term" value="C:fascia adherens"/>
    <property type="evidence" value="ECO:0000266"/>
    <property type="project" value="RGD"/>
</dbReference>
<dbReference type="GO" id="GO:0016600">
    <property type="term" value="C:flotillin complex"/>
    <property type="evidence" value="ECO:0000266"/>
    <property type="project" value="RGD"/>
</dbReference>
<dbReference type="GO" id="GO:0098978">
    <property type="term" value="C:glutamatergic synapse"/>
    <property type="evidence" value="ECO:0000266"/>
    <property type="project" value="RGD"/>
</dbReference>
<dbReference type="GO" id="GO:0014704">
    <property type="term" value="C:intercalated disc"/>
    <property type="evidence" value="ECO:0000314"/>
    <property type="project" value="RGD"/>
</dbReference>
<dbReference type="GO" id="GO:0030027">
    <property type="term" value="C:lamellipodium"/>
    <property type="evidence" value="ECO:0000266"/>
    <property type="project" value="RGD"/>
</dbReference>
<dbReference type="GO" id="GO:0016328">
    <property type="term" value="C:lateral plasma membrane"/>
    <property type="evidence" value="ECO:0000314"/>
    <property type="project" value="RGD"/>
</dbReference>
<dbReference type="GO" id="GO:0016020">
    <property type="term" value="C:membrane"/>
    <property type="evidence" value="ECO:0000314"/>
    <property type="project" value="UniProtKB"/>
</dbReference>
<dbReference type="GO" id="GO:0031528">
    <property type="term" value="C:microvillus membrane"/>
    <property type="evidence" value="ECO:0000266"/>
    <property type="project" value="RGD"/>
</dbReference>
<dbReference type="GO" id="GO:0031965">
    <property type="term" value="C:nuclear membrane"/>
    <property type="evidence" value="ECO:0000314"/>
    <property type="project" value="ARUK-UCL"/>
</dbReference>
<dbReference type="GO" id="GO:0005634">
    <property type="term" value="C:nucleus"/>
    <property type="evidence" value="ECO:0000314"/>
    <property type="project" value="CACAO"/>
</dbReference>
<dbReference type="GO" id="GO:0048471">
    <property type="term" value="C:perinuclear region of cytoplasm"/>
    <property type="evidence" value="ECO:0000314"/>
    <property type="project" value="RGD"/>
</dbReference>
<dbReference type="GO" id="GO:0005886">
    <property type="term" value="C:plasma membrane"/>
    <property type="evidence" value="ECO:0000314"/>
    <property type="project" value="ARUK-UCL"/>
</dbReference>
<dbReference type="GO" id="GO:0099092">
    <property type="term" value="C:postsynaptic density, intracellular component"/>
    <property type="evidence" value="ECO:0000266"/>
    <property type="project" value="RGD"/>
</dbReference>
<dbReference type="GO" id="GO:0045211">
    <property type="term" value="C:postsynaptic membrane"/>
    <property type="evidence" value="ECO:0000266"/>
    <property type="project" value="RGD"/>
</dbReference>
<dbReference type="GO" id="GO:0098831">
    <property type="term" value="C:presynaptic active zone cytoplasmic component"/>
    <property type="evidence" value="ECO:0000266"/>
    <property type="project" value="RGD"/>
</dbReference>
<dbReference type="GO" id="GO:0042734">
    <property type="term" value="C:presynaptic membrane"/>
    <property type="evidence" value="ECO:0000266"/>
    <property type="project" value="RGD"/>
</dbReference>
<dbReference type="GO" id="GO:0032991">
    <property type="term" value="C:protein-containing complex"/>
    <property type="evidence" value="ECO:0000314"/>
    <property type="project" value="RGD"/>
</dbReference>
<dbReference type="GO" id="GO:0032993">
    <property type="term" value="C:protein-DNA complex"/>
    <property type="evidence" value="ECO:0000250"/>
    <property type="project" value="UniProtKB"/>
</dbReference>
<dbReference type="GO" id="GO:0090575">
    <property type="term" value="C:RNA polymerase II transcription regulator complex"/>
    <property type="evidence" value="ECO:0000266"/>
    <property type="project" value="RGD"/>
</dbReference>
<dbReference type="GO" id="GO:0098685">
    <property type="term" value="C:Schaffer collateral - CA1 synapse"/>
    <property type="evidence" value="ECO:0000266"/>
    <property type="project" value="RGD"/>
</dbReference>
<dbReference type="GO" id="GO:0034750">
    <property type="term" value="C:Scrib-APC-beta-catenin complex"/>
    <property type="evidence" value="ECO:0000266"/>
    <property type="project" value="RGD"/>
</dbReference>
<dbReference type="GO" id="GO:0000922">
    <property type="term" value="C:spindle pole"/>
    <property type="evidence" value="ECO:0007669"/>
    <property type="project" value="UniProtKB-SubCell"/>
</dbReference>
<dbReference type="GO" id="GO:0045202">
    <property type="term" value="C:synapse"/>
    <property type="evidence" value="ECO:0000266"/>
    <property type="project" value="RGD"/>
</dbReference>
<dbReference type="GO" id="GO:0070160">
    <property type="term" value="C:tight junction"/>
    <property type="evidence" value="ECO:0000314"/>
    <property type="project" value="RGD"/>
</dbReference>
<dbReference type="GO" id="GO:0005667">
    <property type="term" value="C:transcription regulator complex"/>
    <property type="evidence" value="ECO:0000250"/>
    <property type="project" value="UniProtKB"/>
</dbReference>
<dbReference type="GO" id="GO:1990909">
    <property type="term" value="C:Wnt signalosome"/>
    <property type="evidence" value="ECO:0000266"/>
    <property type="project" value="RGD"/>
</dbReference>
<dbReference type="GO" id="GO:0030018">
    <property type="term" value="C:Z disc"/>
    <property type="evidence" value="ECO:0000266"/>
    <property type="project" value="RGD"/>
</dbReference>
<dbReference type="GO" id="GO:0045294">
    <property type="term" value="F:alpha-catenin binding"/>
    <property type="evidence" value="ECO:0000353"/>
    <property type="project" value="RGD"/>
</dbReference>
<dbReference type="GO" id="GO:0045296">
    <property type="term" value="F:cadherin binding"/>
    <property type="evidence" value="ECO:0000314"/>
    <property type="project" value="RGD"/>
</dbReference>
<dbReference type="GO" id="GO:0003682">
    <property type="term" value="F:chromatin binding"/>
    <property type="evidence" value="ECO:0000266"/>
    <property type="project" value="RGD"/>
</dbReference>
<dbReference type="GO" id="GO:0070097">
    <property type="term" value="F:delta-catenin binding"/>
    <property type="evidence" value="ECO:0000353"/>
    <property type="project" value="RGD"/>
</dbReference>
<dbReference type="GO" id="GO:0097718">
    <property type="term" value="F:disordered domain specific binding"/>
    <property type="evidence" value="ECO:0000266"/>
    <property type="project" value="RGD"/>
</dbReference>
<dbReference type="GO" id="GO:0140297">
    <property type="term" value="F:DNA-binding transcription factor binding"/>
    <property type="evidence" value="ECO:0000266"/>
    <property type="project" value="RGD"/>
</dbReference>
<dbReference type="GO" id="GO:0019899">
    <property type="term" value="F:enzyme binding"/>
    <property type="evidence" value="ECO:0000266"/>
    <property type="project" value="RGD"/>
</dbReference>
<dbReference type="GO" id="GO:1990226">
    <property type="term" value="F:histone methyltransferase binding"/>
    <property type="evidence" value="ECO:0000266"/>
    <property type="project" value="RGD"/>
</dbReference>
<dbReference type="GO" id="GO:0070411">
    <property type="term" value="F:I-SMAD binding"/>
    <property type="evidence" value="ECO:0000266"/>
    <property type="project" value="RGD"/>
</dbReference>
<dbReference type="GO" id="GO:0035255">
    <property type="term" value="F:ionotropic glutamate receptor binding"/>
    <property type="evidence" value="ECO:0000353"/>
    <property type="project" value="RGD"/>
</dbReference>
<dbReference type="GO" id="GO:0019900">
    <property type="term" value="F:kinase binding"/>
    <property type="evidence" value="ECO:0000266"/>
    <property type="project" value="RGD"/>
</dbReference>
<dbReference type="GO" id="GO:0140677">
    <property type="term" value="F:molecular function activator activity"/>
    <property type="evidence" value="ECO:0000266"/>
    <property type="project" value="RGD"/>
</dbReference>
<dbReference type="GO" id="GO:0050998">
    <property type="term" value="F:nitric-oxide synthase binding"/>
    <property type="evidence" value="ECO:0000353"/>
    <property type="project" value="RGD"/>
</dbReference>
<dbReference type="GO" id="GO:0030331">
    <property type="term" value="F:nuclear estrogen receptor binding"/>
    <property type="evidence" value="ECO:0000266"/>
    <property type="project" value="RGD"/>
</dbReference>
<dbReference type="GO" id="GO:0016922">
    <property type="term" value="F:nuclear receptor binding"/>
    <property type="evidence" value="ECO:0000266"/>
    <property type="project" value="RGD"/>
</dbReference>
<dbReference type="GO" id="GO:0003676">
    <property type="term" value="F:nucleic acid binding"/>
    <property type="evidence" value="ECO:0000266"/>
    <property type="project" value="RGD"/>
</dbReference>
<dbReference type="GO" id="GO:0019902">
    <property type="term" value="F:phosphatase binding"/>
    <property type="evidence" value="ECO:0000266"/>
    <property type="project" value="RGD"/>
</dbReference>
<dbReference type="GO" id="GO:0019901">
    <property type="term" value="F:protein kinase binding"/>
    <property type="evidence" value="ECO:0000266"/>
    <property type="project" value="RGD"/>
</dbReference>
<dbReference type="GO" id="GO:0019903">
    <property type="term" value="F:protein phosphatase binding"/>
    <property type="evidence" value="ECO:0000266"/>
    <property type="project" value="RGD"/>
</dbReference>
<dbReference type="GO" id="GO:0044877">
    <property type="term" value="F:protein-containing complex binding"/>
    <property type="evidence" value="ECO:0000353"/>
    <property type="project" value="RGD"/>
</dbReference>
<dbReference type="GO" id="GO:0061629">
    <property type="term" value="F:RNA polymerase II-specific DNA-binding transcription factor binding"/>
    <property type="evidence" value="ECO:0000250"/>
    <property type="project" value="UniProtKB"/>
</dbReference>
<dbReference type="GO" id="GO:0005102">
    <property type="term" value="F:signaling receptor binding"/>
    <property type="evidence" value="ECO:0000266"/>
    <property type="project" value="RGD"/>
</dbReference>
<dbReference type="GO" id="GO:0046332">
    <property type="term" value="F:SMAD binding"/>
    <property type="evidence" value="ECO:0000266"/>
    <property type="project" value="RGD"/>
</dbReference>
<dbReference type="GO" id="GO:0003713">
    <property type="term" value="F:transcription coactivator activity"/>
    <property type="evidence" value="ECO:0000250"/>
    <property type="project" value="UniProtKB"/>
</dbReference>
<dbReference type="GO" id="GO:0001221">
    <property type="term" value="F:transcription coregulator binding"/>
    <property type="evidence" value="ECO:0000266"/>
    <property type="project" value="RGD"/>
</dbReference>
<dbReference type="GO" id="GO:0001222">
    <property type="term" value="F:transcription corepressor binding"/>
    <property type="evidence" value="ECO:0000266"/>
    <property type="project" value="RGD"/>
</dbReference>
<dbReference type="GO" id="GO:0044325">
    <property type="term" value="F:transmembrane transporter binding"/>
    <property type="evidence" value="ECO:0000266"/>
    <property type="project" value="RGD"/>
</dbReference>
<dbReference type="GO" id="GO:0031625">
    <property type="term" value="F:ubiquitin protein ligase binding"/>
    <property type="evidence" value="ECO:0000266"/>
    <property type="project" value="RGD"/>
</dbReference>
<dbReference type="GO" id="GO:0090425">
    <property type="term" value="P:acinar cell differentiation"/>
    <property type="evidence" value="ECO:0000266"/>
    <property type="project" value="RGD"/>
</dbReference>
<dbReference type="GO" id="GO:0034333">
    <property type="term" value="P:adherens junction assembly"/>
    <property type="evidence" value="ECO:0000250"/>
    <property type="project" value="UniProtKB"/>
</dbReference>
<dbReference type="GO" id="GO:0034332">
    <property type="term" value="P:adherens junction organization"/>
    <property type="evidence" value="ECO:0000266"/>
    <property type="project" value="RGD"/>
</dbReference>
<dbReference type="GO" id="GO:0048513">
    <property type="term" value="P:animal organ development"/>
    <property type="evidence" value="ECO:0000266"/>
    <property type="project" value="RGD"/>
</dbReference>
<dbReference type="GO" id="GO:0009948">
    <property type="term" value="P:anterior/posterior axis specification"/>
    <property type="evidence" value="ECO:0000266"/>
    <property type="project" value="RGD"/>
</dbReference>
<dbReference type="GO" id="GO:0097190">
    <property type="term" value="P:apoptotic signaling pathway"/>
    <property type="evidence" value="ECO:0000266"/>
    <property type="project" value="RGD"/>
</dbReference>
<dbReference type="GO" id="GO:0036520">
    <property type="term" value="P:astrocyte-dopaminergic neuron signaling"/>
    <property type="evidence" value="ECO:0000266"/>
    <property type="project" value="RGD"/>
</dbReference>
<dbReference type="GO" id="GO:0070830">
    <property type="term" value="P:bicellular tight junction assembly"/>
    <property type="evidence" value="ECO:0000266"/>
    <property type="project" value="RGD"/>
</dbReference>
<dbReference type="GO" id="GO:0046849">
    <property type="term" value="P:bone remodeling"/>
    <property type="evidence" value="ECO:0000270"/>
    <property type="project" value="RGD"/>
</dbReference>
<dbReference type="GO" id="GO:0045453">
    <property type="term" value="P:bone resorption"/>
    <property type="evidence" value="ECO:0000266"/>
    <property type="project" value="RGD"/>
</dbReference>
<dbReference type="GO" id="GO:0001569">
    <property type="term" value="P:branching involved in blood vessel morphogenesis"/>
    <property type="evidence" value="ECO:0000266"/>
    <property type="project" value="RGD"/>
</dbReference>
<dbReference type="GO" id="GO:0001658">
    <property type="term" value="P:branching involved in ureteric bud morphogenesis"/>
    <property type="evidence" value="ECO:0000266"/>
    <property type="project" value="RGD"/>
</dbReference>
<dbReference type="GO" id="GO:0060070">
    <property type="term" value="P:canonical Wnt signaling pathway"/>
    <property type="evidence" value="ECO:0000250"/>
    <property type="project" value="UniProtKB"/>
</dbReference>
<dbReference type="GO" id="GO:0044338">
    <property type="term" value="P:canonical Wnt signaling pathway involved in mesenchymal stem cell differentiation"/>
    <property type="evidence" value="ECO:0000266"/>
    <property type="project" value="RGD"/>
</dbReference>
<dbReference type="GO" id="GO:0007155">
    <property type="term" value="P:cell adhesion"/>
    <property type="evidence" value="ECO:0000250"/>
    <property type="project" value="UniProtKB"/>
</dbReference>
<dbReference type="GO" id="GO:0030154">
    <property type="term" value="P:cell differentiation"/>
    <property type="evidence" value="ECO:0000266"/>
    <property type="project" value="RGD"/>
</dbReference>
<dbReference type="GO" id="GO:0001708">
    <property type="term" value="P:cell fate specification"/>
    <property type="evidence" value="ECO:0000266"/>
    <property type="project" value="RGD"/>
</dbReference>
<dbReference type="GO" id="GO:0048469">
    <property type="term" value="P:cell maturation"/>
    <property type="evidence" value="ECO:0000266"/>
    <property type="project" value="RGD"/>
</dbReference>
<dbReference type="GO" id="GO:0000902">
    <property type="term" value="P:cell morphogenesis"/>
    <property type="evidence" value="ECO:0000266"/>
    <property type="project" value="RGD"/>
</dbReference>
<dbReference type="GO" id="GO:0008283">
    <property type="term" value="P:cell population proliferation"/>
    <property type="evidence" value="ECO:0000266"/>
    <property type="project" value="RGD"/>
</dbReference>
<dbReference type="GO" id="GO:0098609">
    <property type="term" value="P:cell-cell adhesion"/>
    <property type="evidence" value="ECO:0000314"/>
    <property type="project" value="RGD"/>
</dbReference>
<dbReference type="GO" id="GO:0044331">
    <property type="term" value="P:cell-cell adhesion mediated by cadherin"/>
    <property type="evidence" value="ECO:0000266"/>
    <property type="project" value="RGD"/>
</dbReference>
<dbReference type="GO" id="GO:0007160">
    <property type="term" value="P:cell-matrix adhesion"/>
    <property type="evidence" value="ECO:0000266"/>
    <property type="project" value="RGD"/>
</dbReference>
<dbReference type="GO" id="GO:0044344">
    <property type="term" value="P:cellular response to fibroblast growth factor stimulus"/>
    <property type="evidence" value="ECO:0000270"/>
    <property type="project" value="RGD"/>
</dbReference>
<dbReference type="GO" id="GO:0071363">
    <property type="term" value="P:cellular response to growth factor stimulus"/>
    <property type="evidence" value="ECO:0000250"/>
    <property type="project" value="UniProtKB"/>
</dbReference>
<dbReference type="GO" id="GO:0071681">
    <property type="term" value="P:cellular response to indole-3-methanol"/>
    <property type="evidence" value="ECO:0000250"/>
    <property type="project" value="UniProtKB"/>
</dbReference>
<dbReference type="GO" id="GO:1990314">
    <property type="term" value="P:cellular response to insulin-like growth factor stimulus"/>
    <property type="evidence" value="ECO:0000315"/>
    <property type="project" value="RGD"/>
</dbReference>
<dbReference type="GO" id="GO:0071285">
    <property type="term" value="P:cellular response to lithium ion"/>
    <property type="evidence" value="ECO:0000270"/>
    <property type="project" value="RGD"/>
</dbReference>
<dbReference type="GO" id="GO:0071260">
    <property type="term" value="P:cellular response to mechanical stimulus"/>
    <property type="evidence" value="ECO:0000314"/>
    <property type="project" value="RGD"/>
</dbReference>
<dbReference type="GO" id="GO:0034224">
    <property type="term" value="P:cellular response to zinc ion starvation"/>
    <property type="evidence" value="ECO:0000270"/>
    <property type="project" value="RGD"/>
</dbReference>
<dbReference type="GO" id="GO:0022009">
    <property type="term" value="P:central nervous system vasculogenesis"/>
    <property type="evidence" value="ECO:0000266"/>
    <property type="project" value="RGD"/>
</dbReference>
<dbReference type="GO" id="GO:0007268">
    <property type="term" value="P:chemical synaptic transmission"/>
    <property type="evidence" value="ECO:0000266"/>
    <property type="project" value="RGD"/>
</dbReference>
<dbReference type="GO" id="GO:0002062">
    <property type="term" value="P:chondrocyte differentiation"/>
    <property type="evidence" value="ECO:0000266"/>
    <property type="project" value="RGD"/>
</dbReference>
<dbReference type="GO" id="GO:0061550">
    <property type="term" value="P:cranial ganglion development"/>
    <property type="evidence" value="ECO:0000266"/>
    <property type="project" value="RGD"/>
</dbReference>
<dbReference type="GO" id="GO:1904888">
    <property type="term" value="P:cranial skeletal system development"/>
    <property type="evidence" value="ECO:0000266"/>
    <property type="project" value="RGD"/>
</dbReference>
<dbReference type="GO" id="GO:0006351">
    <property type="term" value="P:DNA-templated transcription"/>
    <property type="evidence" value="ECO:0000266"/>
    <property type="project" value="RGD"/>
</dbReference>
<dbReference type="GO" id="GO:1990791">
    <property type="term" value="P:dorsal root ganglion development"/>
    <property type="evidence" value="ECO:0000266"/>
    <property type="project" value="RGD"/>
</dbReference>
<dbReference type="GO" id="GO:0009950">
    <property type="term" value="P:dorsal/ventral axis specification"/>
    <property type="evidence" value="ECO:0000266"/>
    <property type="project" value="RGD"/>
</dbReference>
<dbReference type="GO" id="GO:0009953">
    <property type="term" value="P:dorsal/ventral pattern formation"/>
    <property type="evidence" value="ECO:0000266"/>
    <property type="project" value="RGD"/>
</dbReference>
<dbReference type="GO" id="GO:0007398">
    <property type="term" value="P:ectoderm development"/>
    <property type="evidence" value="ECO:0000266"/>
    <property type="project" value="RGD"/>
</dbReference>
<dbReference type="GO" id="GO:0000578">
    <property type="term" value="P:embryonic axis specification"/>
    <property type="evidence" value="ECO:0000266"/>
    <property type="project" value="RGD"/>
</dbReference>
<dbReference type="GO" id="GO:1990403">
    <property type="term" value="P:embryonic brain development"/>
    <property type="evidence" value="ECO:0000266"/>
    <property type="project" value="RGD"/>
</dbReference>
<dbReference type="GO" id="GO:0042733">
    <property type="term" value="P:embryonic digit morphogenesis"/>
    <property type="evidence" value="ECO:0000266"/>
    <property type="project" value="RGD"/>
</dbReference>
<dbReference type="GO" id="GO:0048617">
    <property type="term" value="P:embryonic foregut morphogenesis"/>
    <property type="evidence" value="ECO:0000266"/>
    <property type="project" value="RGD"/>
</dbReference>
<dbReference type="GO" id="GO:0035115">
    <property type="term" value="P:embryonic forelimb morphogenesis"/>
    <property type="evidence" value="ECO:0000266"/>
    <property type="project" value="RGD"/>
</dbReference>
<dbReference type="GO" id="GO:0035050">
    <property type="term" value="P:embryonic heart tube development"/>
    <property type="evidence" value="ECO:0000266"/>
    <property type="project" value="RGD"/>
</dbReference>
<dbReference type="GO" id="GO:0035116">
    <property type="term" value="P:embryonic hindlimb morphogenesis"/>
    <property type="evidence" value="ECO:0000266"/>
    <property type="project" value="RGD"/>
</dbReference>
<dbReference type="GO" id="GO:0048568">
    <property type="term" value="P:embryonic organ development"/>
    <property type="evidence" value="ECO:0000266"/>
    <property type="project" value="RGD"/>
</dbReference>
<dbReference type="GO" id="GO:0036023">
    <property type="term" value="P:embryonic skeletal limb joint morphogenesis"/>
    <property type="evidence" value="ECO:0000266"/>
    <property type="project" value="RGD"/>
</dbReference>
<dbReference type="GO" id="GO:0001706">
    <property type="term" value="P:endoderm formation"/>
    <property type="evidence" value="ECO:0000266"/>
    <property type="project" value="RGD"/>
</dbReference>
<dbReference type="GO" id="GO:0001711">
    <property type="term" value="P:endodermal cell fate commitment"/>
    <property type="evidence" value="ECO:0000266"/>
    <property type="project" value="RGD"/>
</dbReference>
<dbReference type="GO" id="GO:0061154">
    <property type="term" value="P:endothelial tube morphogenesis"/>
    <property type="evidence" value="ECO:0000250"/>
    <property type="project" value="UniProtKB"/>
</dbReference>
<dbReference type="GO" id="GO:0007173">
    <property type="term" value="P:epidermal growth factor receptor signaling pathway"/>
    <property type="evidence" value="ECO:0000266"/>
    <property type="project" value="RGD"/>
</dbReference>
<dbReference type="GO" id="GO:1905867">
    <property type="term" value="P:epididymis development"/>
    <property type="evidence" value="ECO:0000270"/>
    <property type="project" value="RGD"/>
</dbReference>
<dbReference type="GO" id="GO:0060742">
    <property type="term" value="P:epithelial cell differentiation involved in prostate gland development"/>
    <property type="evidence" value="ECO:0000266"/>
    <property type="project" value="RGD"/>
</dbReference>
<dbReference type="GO" id="GO:0060767">
    <property type="term" value="P:epithelial cell proliferation involved in prostate gland development"/>
    <property type="evidence" value="ECO:0000266"/>
    <property type="project" value="RGD"/>
</dbReference>
<dbReference type="GO" id="GO:0060441">
    <property type="term" value="P:epithelial tube branching involved in lung morphogenesis"/>
    <property type="evidence" value="ECO:0000266"/>
    <property type="project" value="RGD"/>
</dbReference>
<dbReference type="GO" id="GO:0060856">
    <property type="term" value="P:establishment of blood-brain barrier"/>
    <property type="evidence" value="ECO:0000266"/>
    <property type="project" value="RGD"/>
</dbReference>
<dbReference type="GO" id="GO:1990963">
    <property type="term" value="P:establishment of blood-retinal barrier"/>
    <property type="evidence" value="ECO:0000266"/>
    <property type="project" value="RGD"/>
</dbReference>
<dbReference type="GO" id="GO:0008543">
    <property type="term" value="P:fibroblast growth factor receptor signaling pathway"/>
    <property type="evidence" value="ECO:0000266"/>
    <property type="project" value="RGD"/>
</dbReference>
<dbReference type="GO" id="GO:0030900">
    <property type="term" value="P:forebrain development"/>
    <property type="evidence" value="ECO:0000266"/>
    <property type="project" value="RGD"/>
</dbReference>
<dbReference type="GO" id="GO:0061198">
    <property type="term" value="P:fungiform papilla formation"/>
    <property type="evidence" value="ECO:0000266"/>
    <property type="project" value="RGD"/>
</dbReference>
<dbReference type="GO" id="GO:0001702">
    <property type="term" value="P:gastrulation with mouth forming second"/>
    <property type="evidence" value="ECO:0000266"/>
    <property type="project" value="RGD"/>
</dbReference>
<dbReference type="GO" id="GO:0010467">
    <property type="term" value="P:gene expression"/>
    <property type="evidence" value="ECO:0000266"/>
    <property type="project" value="RGD"/>
</dbReference>
<dbReference type="GO" id="GO:0035112">
    <property type="term" value="P:genitalia morphogenesis"/>
    <property type="evidence" value="ECO:0000266"/>
    <property type="project" value="RGD"/>
</dbReference>
<dbReference type="GO" id="GO:0002067">
    <property type="term" value="P:glandular epithelial cell differentiation"/>
    <property type="evidence" value="ECO:0000266"/>
    <property type="project" value="RGD"/>
</dbReference>
<dbReference type="GO" id="GO:0007403">
    <property type="term" value="P:glial cell fate determination"/>
    <property type="evidence" value="ECO:0000266"/>
    <property type="project" value="RGD"/>
</dbReference>
<dbReference type="GO" id="GO:0022405">
    <property type="term" value="P:hair cycle process"/>
    <property type="evidence" value="ECO:0000266"/>
    <property type="project" value="RGD"/>
</dbReference>
<dbReference type="GO" id="GO:0031069">
    <property type="term" value="P:hair follicle morphogenesis"/>
    <property type="evidence" value="ECO:0000266"/>
    <property type="project" value="RGD"/>
</dbReference>
<dbReference type="GO" id="GO:0060789">
    <property type="term" value="P:hair follicle placode formation"/>
    <property type="evidence" value="ECO:0000266"/>
    <property type="project" value="RGD"/>
</dbReference>
<dbReference type="GO" id="GO:0007507">
    <property type="term" value="P:heart development"/>
    <property type="evidence" value="ECO:0000266"/>
    <property type="project" value="RGD"/>
</dbReference>
<dbReference type="GO" id="GO:0030097">
    <property type="term" value="P:hemopoiesis"/>
    <property type="evidence" value="ECO:0000266"/>
    <property type="project" value="RGD"/>
</dbReference>
<dbReference type="GO" id="GO:0030902">
    <property type="term" value="P:hindbrain development"/>
    <property type="evidence" value="ECO:0000266"/>
    <property type="project" value="RGD"/>
</dbReference>
<dbReference type="GO" id="GO:0021854">
    <property type="term" value="P:hypothalamus development"/>
    <property type="evidence" value="ECO:0000266"/>
    <property type="project" value="RGD"/>
</dbReference>
<dbReference type="GO" id="GO:0001701">
    <property type="term" value="P:in utero embryonic development"/>
    <property type="evidence" value="ECO:0000266"/>
    <property type="project" value="RGD"/>
</dbReference>
<dbReference type="GO" id="GO:0001822">
    <property type="term" value="P:kidney development"/>
    <property type="evidence" value="ECO:0000266"/>
    <property type="project" value="RGD"/>
</dbReference>
<dbReference type="GO" id="GO:0021819">
    <property type="term" value="P:layer formation in cerebral cortex"/>
    <property type="evidence" value="ECO:0000266"/>
    <property type="project" value="RGD"/>
</dbReference>
<dbReference type="GO" id="GO:0002089">
    <property type="term" value="P:lens morphogenesis in camera-type eye"/>
    <property type="evidence" value="ECO:0000266"/>
    <property type="project" value="RGD"/>
</dbReference>
<dbReference type="GO" id="GO:0060173">
    <property type="term" value="P:limb development"/>
    <property type="evidence" value="ECO:0000266"/>
    <property type="project" value="RGD"/>
</dbReference>
<dbReference type="GO" id="GO:0001889">
    <property type="term" value="P:liver development"/>
    <property type="evidence" value="ECO:0000270"/>
    <property type="project" value="RGD"/>
</dbReference>
<dbReference type="GO" id="GO:0060479">
    <property type="term" value="P:lung cell differentiation"/>
    <property type="evidence" value="ECO:0000266"/>
    <property type="project" value="RGD"/>
</dbReference>
<dbReference type="GO" id="GO:0030324">
    <property type="term" value="P:lung development"/>
    <property type="evidence" value="ECO:0000266"/>
    <property type="project" value="RGD"/>
</dbReference>
<dbReference type="GO" id="GO:0060487">
    <property type="term" value="P:lung epithelial cell differentiation"/>
    <property type="evidence" value="ECO:0000266"/>
    <property type="project" value="RGD"/>
</dbReference>
<dbReference type="GO" id="GO:0060492">
    <property type="term" value="P:lung induction"/>
    <property type="evidence" value="ECO:0000266"/>
    <property type="project" value="RGD"/>
</dbReference>
<dbReference type="GO" id="GO:0060484">
    <property type="term" value="P:lung-associated mesenchyme development"/>
    <property type="evidence" value="ECO:0000266"/>
    <property type="project" value="RGD"/>
</dbReference>
<dbReference type="GO" id="GO:0030539">
    <property type="term" value="P:male genitalia development"/>
    <property type="evidence" value="ECO:0000266"/>
    <property type="project" value="RGD"/>
</dbReference>
<dbReference type="GO" id="GO:0000165">
    <property type="term" value="P:MAPK cascade"/>
    <property type="evidence" value="ECO:0000266"/>
    <property type="project" value="RGD"/>
</dbReference>
<dbReference type="GO" id="GO:0010463">
    <property type="term" value="P:mesenchymal cell proliferation"/>
    <property type="evidence" value="ECO:0000266"/>
    <property type="project" value="RGD"/>
</dbReference>
<dbReference type="GO" id="GO:0060916">
    <property type="term" value="P:mesenchymal cell proliferation involved in lung development"/>
    <property type="evidence" value="ECO:0000266"/>
    <property type="project" value="RGD"/>
</dbReference>
<dbReference type="GO" id="GO:0072497">
    <property type="term" value="P:mesenchymal stem cell differentiation"/>
    <property type="evidence" value="ECO:0000266"/>
    <property type="project" value="RGD"/>
</dbReference>
<dbReference type="GO" id="GO:0060231">
    <property type="term" value="P:mesenchymal to epithelial transition"/>
    <property type="evidence" value="ECO:0000250"/>
    <property type="project" value="UniProtKB"/>
</dbReference>
<dbReference type="GO" id="GO:0003338">
    <property type="term" value="P:metanephros morphogenesis"/>
    <property type="evidence" value="ECO:0000266"/>
    <property type="project" value="RGD"/>
</dbReference>
<dbReference type="GO" id="GO:0030901">
    <property type="term" value="P:midbrain development"/>
    <property type="evidence" value="ECO:0000266"/>
    <property type="project" value="RGD"/>
</dbReference>
<dbReference type="GO" id="GO:1904948">
    <property type="term" value="P:midbrain dopaminergic neuron differentiation"/>
    <property type="evidence" value="ECO:0000266"/>
    <property type="project" value="RGD"/>
</dbReference>
<dbReference type="GO" id="GO:0007494">
    <property type="term" value="P:midgut development"/>
    <property type="evidence" value="ECO:0000270"/>
    <property type="project" value="RGD"/>
</dbReference>
<dbReference type="GO" id="GO:0016331">
    <property type="term" value="P:morphogenesis of embryonic epithelium"/>
    <property type="evidence" value="ECO:0000266"/>
    <property type="project" value="RGD"/>
</dbReference>
<dbReference type="GO" id="GO:0045445">
    <property type="term" value="P:myoblast differentiation"/>
    <property type="evidence" value="ECO:0000270"/>
    <property type="project" value="RGD"/>
</dbReference>
<dbReference type="GO" id="GO:0051450">
    <property type="term" value="P:myoblast proliferation"/>
    <property type="evidence" value="ECO:0000266"/>
    <property type="project" value="RGD"/>
</dbReference>
<dbReference type="GO" id="GO:0016525">
    <property type="term" value="P:negative regulation of angiogenesis"/>
    <property type="evidence" value="ECO:0000266"/>
    <property type="project" value="RGD"/>
</dbReference>
<dbReference type="GO" id="GO:0043066">
    <property type="term" value="P:negative regulation of apoptotic process"/>
    <property type="evidence" value="ECO:0000266"/>
    <property type="project" value="RGD"/>
</dbReference>
<dbReference type="GO" id="GO:2001234">
    <property type="term" value="P:negative regulation of apoptotic signaling pathway"/>
    <property type="evidence" value="ECO:0000266"/>
    <property type="project" value="RGD"/>
</dbReference>
<dbReference type="GO" id="GO:0090090">
    <property type="term" value="P:negative regulation of canonical Wnt signaling pathway"/>
    <property type="evidence" value="ECO:0000266"/>
    <property type="project" value="RGD"/>
</dbReference>
<dbReference type="GO" id="GO:0045596">
    <property type="term" value="P:negative regulation of cell differentiation"/>
    <property type="evidence" value="ECO:0000266"/>
    <property type="project" value="RGD"/>
</dbReference>
<dbReference type="GO" id="GO:0008285">
    <property type="term" value="P:negative regulation of cell population proliferation"/>
    <property type="evidence" value="ECO:0000250"/>
    <property type="project" value="UniProtKB"/>
</dbReference>
<dbReference type="GO" id="GO:0032331">
    <property type="term" value="P:negative regulation of chondrocyte differentiation"/>
    <property type="evidence" value="ECO:0000266"/>
    <property type="project" value="RGD"/>
</dbReference>
<dbReference type="GO" id="GO:0045892">
    <property type="term" value="P:negative regulation of DNA-templated transcription"/>
    <property type="evidence" value="ECO:0000250"/>
    <property type="project" value="UniProtKB"/>
</dbReference>
<dbReference type="GO" id="GO:0010629">
    <property type="term" value="P:negative regulation of gene expression"/>
    <property type="evidence" value="ECO:0000315"/>
    <property type="project" value="BHF-UCL"/>
</dbReference>
<dbReference type="GO" id="GO:0003340">
    <property type="term" value="P:negative regulation of mesenchymal to epithelial transition involved in metanephros morphogenesis"/>
    <property type="evidence" value="ECO:0000266"/>
    <property type="project" value="RGD"/>
</dbReference>
<dbReference type="GO" id="GO:0045976">
    <property type="term" value="P:negative regulation of mitotic cell cycle, embryonic"/>
    <property type="evidence" value="ECO:0000250"/>
    <property type="project" value="UniProtKB"/>
</dbReference>
<dbReference type="GO" id="GO:0050768">
    <property type="term" value="P:negative regulation of neurogenesis"/>
    <property type="evidence" value="ECO:0000266"/>
    <property type="project" value="RGD"/>
</dbReference>
<dbReference type="GO" id="GO:0043524">
    <property type="term" value="P:negative regulation of neuron apoptotic process"/>
    <property type="evidence" value="ECO:0000266"/>
    <property type="project" value="RGD"/>
</dbReference>
<dbReference type="GO" id="GO:0048715">
    <property type="term" value="P:negative regulation of oligodendrocyte differentiation"/>
    <property type="evidence" value="ECO:0000266"/>
    <property type="project" value="RGD"/>
</dbReference>
<dbReference type="GO" id="GO:0045671">
    <property type="term" value="P:negative regulation of osteoclast differentiation"/>
    <property type="evidence" value="ECO:0000266"/>
    <property type="project" value="RGD"/>
</dbReference>
<dbReference type="GO" id="GO:1903377">
    <property type="term" value="P:negative regulation of oxidative stress-induced neuron intrinsic apoptotic signaling pathway"/>
    <property type="evidence" value="ECO:0000266"/>
    <property type="project" value="RGD"/>
</dbReference>
<dbReference type="GO" id="GO:0033234">
    <property type="term" value="P:negative regulation of protein sumoylation"/>
    <property type="evidence" value="ECO:0000250"/>
    <property type="project" value="UniProtKB"/>
</dbReference>
<dbReference type="GO" id="GO:0000122">
    <property type="term" value="P:negative regulation of transcription by RNA polymerase II"/>
    <property type="evidence" value="ECO:0000266"/>
    <property type="project" value="RGD"/>
</dbReference>
<dbReference type="GO" id="GO:0072079">
    <property type="term" value="P:nephron tubule formation"/>
    <property type="evidence" value="ECO:0000266"/>
    <property type="project" value="RGD"/>
</dbReference>
<dbReference type="GO" id="GO:0001840">
    <property type="term" value="P:neural plate development"/>
    <property type="evidence" value="ECO:0000266"/>
    <property type="project" value="RGD"/>
</dbReference>
<dbReference type="GO" id="GO:0007405">
    <property type="term" value="P:neuroblast proliferation"/>
    <property type="evidence" value="ECO:0000266"/>
    <property type="project" value="RGD"/>
</dbReference>
<dbReference type="GO" id="GO:0030182">
    <property type="term" value="P:neuron differentiation"/>
    <property type="evidence" value="ECO:0000266"/>
    <property type="project" value="RGD"/>
</dbReference>
<dbReference type="GO" id="GO:0048664">
    <property type="term" value="P:neuron fate determination"/>
    <property type="evidence" value="ECO:0000266"/>
    <property type="project" value="RGD"/>
</dbReference>
<dbReference type="GO" id="GO:0001764">
    <property type="term" value="P:neuron migration"/>
    <property type="evidence" value="ECO:0000266"/>
    <property type="project" value="RGD"/>
</dbReference>
<dbReference type="GO" id="GO:1990138">
    <property type="term" value="P:neuron projection extension"/>
    <property type="evidence" value="ECO:0000250"/>
    <property type="project" value="UniProtKB"/>
</dbReference>
<dbReference type="GO" id="GO:0042475">
    <property type="term" value="P:odontogenesis of dentin-containing tooth"/>
    <property type="evidence" value="ECO:0000270"/>
    <property type="project" value="RGD"/>
</dbReference>
<dbReference type="GO" id="GO:0048709">
    <property type="term" value="P:oligodendrocyte differentiation"/>
    <property type="evidence" value="ECO:0000266"/>
    <property type="project" value="RGD"/>
</dbReference>
<dbReference type="GO" id="GO:0048599">
    <property type="term" value="P:oocyte development"/>
    <property type="evidence" value="ECO:0000266"/>
    <property type="project" value="RGD"/>
</dbReference>
<dbReference type="GO" id="GO:0001649">
    <property type="term" value="P:osteoblast differentiation"/>
    <property type="evidence" value="ECO:0000266"/>
    <property type="project" value="RGD"/>
</dbReference>
<dbReference type="GO" id="GO:0030316">
    <property type="term" value="P:osteoclast differentiation"/>
    <property type="evidence" value="ECO:0000266"/>
    <property type="project" value="RGD"/>
</dbReference>
<dbReference type="GO" id="GO:0003151">
    <property type="term" value="P:outflow tract morphogenesis"/>
    <property type="evidence" value="ECO:0000266"/>
    <property type="project" value="RGD"/>
</dbReference>
<dbReference type="GO" id="GO:0060066">
    <property type="term" value="P:oviduct development"/>
    <property type="evidence" value="ECO:0000266"/>
    <property type="project" value="RGD"/>
</dbReference>
<dbReference type="GO" id="GO:0031016">
    <property type="term" value="P:pancreas development"/>
    <property type="evidence" value="ECO:0000266"/>
    <property type="project" value="RGD"/>
</dbReference>
<dbReference type="GO" id="GO:0043065">
    <property type="term" value="P:positive regulation of apoptotic process"/>
    <property type="evidence" value="ECO:0000250"/>
    <property type="project" value="UniProtKB"/>
</dbReference>
<dbReference type="GO" id="GO:1905555">
    <property type="term" value="P:positive regulation of blood vessel branching"/>
    <property type="evidence" value="ECO:0000266"/>
    <property type="project" value="RGD"/>
</dbReference>
<dbReference type="GO" id="GO:0061047">
    <property type="term" value="P:positive regulation of branching involved in lung morphogenesis"/>
    <property type="evidence" value="ECO:0000266"/>
    <property type="project" value="RGD"/>
</dbReference>
<dbReference type="GO" id="GO:0008284">
    <property type="term" value="P:positive regulation of cell population proliferation"/>
    <property type="evidence" value="ECO:0000266"/>
    <property type="project" value="RGD"/>
</dbReference>
<dbReference type="GO" id="GO:2000017">
    <property type="term" value="P:positive regulation of determination of dorsal identity"/>
    <property type="evidence" value="ECO:0000266"/>
    <property type="project" value="RGD"/>
</dbReference>
<dbReference type="GO" id="GO:0045893">
    <property type="term" value="P:positive regulation of DNA-templated transcription"/>
    <property type="evidence" value="ECO:0000250"/>
    <property type="project" value="UniProtKB"/>
</dbReference>
<dbReference type="GO" id="GO:0045603">
    <property type="term" value="P:positive regulation of endothelial cell differentiation"/>
    <property type="evidence" value="ECO:0000266"/>
    <property type="project" value="RGD"/>
</dbReference>
<dbReference type="GO" id="GO:0030858">
    <property type="term" value="P:positive regulation of epithelial cell differentiation"/>
    <property type="evidence" value="ECO:0000266"/>
    <property type="project" value="RGD"/>
</dbReference>
<dbReference type="GO" id="GO:0060769">
    <property type="term" value="P:positive regulation of epithelial cell proliferation involved in prostate gland development"/>
    <property type="evidence" value="ECO:0000266"/>
    <property type="project" value="RGD"/>
</dbReference>
<dbReference type="GO" id="GO:0010718">
    <property type="term" value="P:positive regulation of epithelial to mesenchymal transition"/>
    <property type="evidence" value="ECO:0000266"/>
    <property type="project" value="RGD"/>
</dbReference>
<dbReference type="GO" id="GO:0045743">
    <property type="term" value="P:positive regulation of fibroblast growth factor receptor signaling pathway"/>
    <property type="evidence" value="ECO:0000266"/>
    <property type="project" value="RGD"/>
</dbReference>
<dbReference type="GO" id="GO:0010628">
    <property type="term" value="P:positive regulation of gene expression"/>
    <property type="evidence" value="ECO:0000266"/>
    <property type="project" value="RGD"/>
</dbReference>
<dbReference type="GO" id="GO:0010909">
    <property type="term" value="P:positive regulation of heparan sulfate proteoglycan biosynthetic process"/>
    <property type="evidence" value="ECO:0000250"/>
    <property type="project" value="UniProtKB"/>
</dbReference>
<dbReference type="GO" id="GO:0034112">
    <property type="term" value="P:positive regulation of homotypic cell-cell adhesion"/>
    <property type="evidence" value="ECO:0000266"/>
    <property type="project" value="RGD"/>
</dbReference>
<dbReference type="GO" id="GO:0043410">
    <property type="term" value="P:positive regulation of MAPK cascade"/>
    <property type="evidence" value="ECO:0000266"/>
    <property type="project" value="RGD"/>
</dbReference>
<dbReference type="GO" id="GO:0002053">
    <property type="term" value="P:positive regulation of mesenchymal cell proliferation"/>
    <property type="evidence" value="ECO:0000266"/>
    <property type="project" value="RGD"/>
</dbReference>
<dbReference type="GO" id="GO:2000288">
    <property type="term" value="P:positive regulation of myoblast proliferation"/>
    <property type="evidence" value="ECO:0000266"/>
    <property type="project" value="RGD"/>
</dbReference>
<dbReference type="GO" id="GO:2000179">
    <property type="term" value="P:positive regulation of neural precursor cell proliferation"/>
    <property type="evidence" value="ECO:0000266"/>
    <property type="project" value="RGD"/>
</dbReference>
<dbReference type="GO" id="GO:0002052">
    <property type="term" value="P:positive regulation of neuroblast proliferation"/>
    <property type="evidence" value="ECO:0000250"/>
    <property type="project" value="UniProtKB"/>
</dbReference>
<dbReference type="GO" id="GO:0043525">
    <property type="term" value="P:positive regulation of neuron apoptotic process"/>
    <property type="evidence" value="ECO:0000266"/>
    <property type="project" value="RGD"/>
</dbReference>
<dbReference type="GO" id="GO:1901331">
    <property type="term" value="P:positive regulation of odontoblast differentiation"/>
    <property type="evidence" value="ECO:0000266"/>
    <property type="project" value="RGD"/>
</dbReference>
<dbReference type="GO" id="GO:0045669">
    <property type="term" value="P:positive regulation of osteoblast differentiation"/>
    <property type="evidence" value="ECO:0000266"/>
    <property type="project" value="RGD"/>
</dbReference>
<dbReference type="GO" id="GO:0048643">
    <property type="term" value="P:positive regulation of skeletal muscle tissue development"/>
    <property type="evidence" value="ECO:0000266"/>
    <property type="project" value="RGD"/>
</dbReference>
<dbReference type="GO" id="GO:2000648">
    <property type="term" value="P:positive regulation of stem cell proliferation"/>
    <property type="evidence" value="ECO:0000266"/>
    <property type="project" value="RGD"/>
</dbReference>
<dbReference type="GO" id="GO:0032212">
    <property type="term" value="P:positive regulation of telomere maintenance via telomerase"/>
    <property type="evidence" value="ECO:0000266"/>
    <property type="project" value="RGD"/>
</dbReference>
<dbReference type="GO" id="GO:0045944">
    <property type="term" value="P:positive regulation of transcription by RNA polymerase II"/>
    <property type="evidence" value="ECO:0000250"/>
    <property type="project" value="UniProtKB"/>
</dbReference>
<dbReference type="GO" id="GO:0032968">
    <property type="term" value="P:positive regulation of transcription elongation by RNA polymerase II"/>
    <property type="evidence" value="ECO:0000266"/>
    <property type="project" value="RGD"/>
</dbReference>
<dbReference type="GO" id="GO:0043161">
    <property type="term" value="P:proteasome-mediated ubiquitin-dependent protein catabolic process"/>
    <property type="evidence" value="ECO:0000266"/>
    <property type="project" value="RGD"/>
</dbReference>
<dbReference type="GO" id="GO:0008104">
    <property type="term" value="P:protein localization"/>
    <property type="evidence" value="ECO:0000266"/>
    <property type="project" value="RGD"/>
</dbReference>
<dbReference type="GO" id="GO:0034394">
    <property type="term" value="P:protein localization to cell surface"/>
    <property type="evidence" value="ECO:0000250"/>
    <property type="project" value="UniProtKB"/>
</dbReference>
<dbReference type="GO" id="GO:0000209">
    <property type="term" value="P:protein polyubiquitination"/>
    <property type="evidence" value="ECO:0000266"/>
    <property type="project" value="RGD"/>
</dbReference>
<dbReference type="GO" id="GO:0009954">
    <property type="term" value="P:proximal/distal pattern formation"/>
    <property type="evidence" value="ECO:0000266"/>
    <property type="project" value="RGD"/>
</dbReference>
<dbReference type="GO" id="GO:0042981">
    <property type="term" value="P:regulation of apoptotic process"/>
    <property type="evidence" value="ECO:0000266"/>
    <property type="project" value="RGD"/>
</dbReference>
<dbReference type="GO" id="GO:0090279">
    <property type="term" value="P:regulation of calcium ion import"/>
    <property type="evidence" value="ECO:0000250"/>
    <property type="project" value="UniProtKB"/>
</dbReference>
<dbReference type="GO" id="GO:0045595">
    <property type="term" value="P:regulation of cell differentiation"/>
    <property type="evidence" value="ECO:0000266"/>
    <property type="project" value="RGD"/>
</dbReference>
<dbReference type="GO" id="GO:0042127">
    <property type="term" value="P:regulation of cell population proliferation"/>
    <property type="evidence" value="ECO:0000266"/>
    <property type="project" value="RGD"/>
</dbReference>
<dbReference type="GO" id="GO:0030997">
    <property type="term" value="P:regulation of centriole-centriole cohesion"/>
    <property type="evidence" value="ECO:0000250"/>
    <property type="project" value="UniProtKB"/>
</dbReference>
<dbReference type="GO" id="GO:0070602">
    <property type="term" value="P:regulation of centromeric sister chromatid cohesion"/>
    <property type="evidence" value="ECO:0000250"/>
    <property type="project" value="UniProtKB"/>
</dbReference>
<dbReference type="GO" id="GO:0030856">
    <property type="term" value="P:regulation of epithelial cell differentiation"/>
    <property type="evidence" value="ECO:0000266"/>
    <property type="project" value="RGD"/>
</dbReference>
<dbReference type="GO" id="GO:0010717">
    <property type="term" value="P:regulation of epithelial to mesenchymal transition"/>
    <property type="evidence" value="ECO:0000250"/>
    <property type="project" value="UniProtKB"/>
</dbReference>
<dbReference type="GO" id="GO:0010468">
    <property type="term" value="P:regulation of gene expression"/>
    <property type="evidence" value="ECO:0000266"/>
    <property type="project" value="RGD"/>
</dbReference>
<dbReference type="GO" id="GO:0031641">
    <property type="term" value="P:regulation of myelination"/>
    <property type="evidence" value="ECO:0000266"/>
    <property type="project" value="RGD"/>
</dbReference>
<dbReference type="GO" id="GO:0072182">
    <property type="term" value="P:regulation of nephron tubule epithelial cell differentiation"/>
    <property type="evidence" value="ECO:0000266"/>
    <property type="project" value="RGD"/>
</dbReference>
<dbReference type="GO" id="GO:0045667">
    <property type="term" value="P:regulation of osteoblast differentiation"/>
    <property type="evidence" value="ECO:0000266"/>
    <property type="project" value="RGD"/>
</dbReference>
<dbReference type="GO" id="GO:0045670">
    <property type="term" value="P:regulation of osteoclast differentiation"/>
    <property type="evidence" value="ECO:0000266"/>
    <property type="project" value="RGD"/>
</dbReference>
<dbReference type="GO" id="GO:2000008">
    <property type="term" value="P:regulation of protein localization to cell surface"/>
    <property type="evidence" value="ECO:0000250"/>
    <property type="project" value="UniProtKB"/>
</dbReference>
<dbReference type="GO" id="GO:0031396">
    <property type="term" value="P:regulation of protein ubiquitination"/>
    <property type="evidence" value="ECO:0000266"/>
    <property type="project" value="RGD"/>
</dbReference>
<dbReference type="GO" id="GO:0003266">
    <property type="term" value="P:regulation of secondary heart field cardioblast proliferation"/>
    <property type="evidence" value="ECO:0000266"/>
    <property type="project" value="RGD"/>
</dbReference>
<dbReference type="GO" id="GO:0048660">
    <property type="term" value="P:regulation of smooth muscle cell proliferation"/>
    <property type="evidence" value="ECO:0000250"/>
    <property type="project" value="UniProtKB"/>
</dbReference>
<dbReference type="GO" id="GO:0051963">
    <property type="term" value="P:regulation of synapse assembly"/>
    <property type="evidence" value="ECO:0000266"/>
    <property type="project" value="RGD"/>
</dbReference>
<dbReference type="GO" id="GO:0042129">
    <property type="term" value="P:regulation of T cell proliferation"/>
    <property type="evidence" value="ECO:0000266"/>
    <property type="project" value="RGD"/>
</dbReference>
<dbReference type="GO" id="GO:0051884">
    <property type="term" value="P:regulation of timing of anagen"/>
    <property type="evidence" value="ECO:0000266"/>
    <property type="project" value="RGD"/>
</dbReference>
<dbReference type="GO" id="GO:0006357">
    <property type="term" value="P:regulation of transcription by RNA polymerase II"/>
    <property type="evidence" value="ECO:0000266"/>
    <property type="project" value="RGD"/>
</dbReference>
<dbReference type="GO" id="GO:0072053">
    <property type="term" value="P:renal inner medulla development"/>
    <property type="evidence" value="ECO:0000266"/>
    <property type="project" value="RGD"/>
</dbReference>
<dbReference type="GO" id="GO:0072054">
    <property type="term" value="P:renal outer medulla development"/>
    <property type="evidence" value="ECO:0000266"/>
    <property type="project" value="RGD"/>
</dbReference>
<dbReference type="GO" id="GO:0072033">
    <property type="term" value="P:renal vesicle formation"/>
    <property type="evidence" value="ECO:0000266"/>
    <property type="project" value="RGD"/>
</dbReference>
<dbReference type="GO" id="GO:0014823">
    <property type="term" value="P:response to activity"/>
    <property type="evidence" value="ECO:0000270"/>
    <property type="project" value="RGD"/>
</dbReference>
<dbReference type="GO" id="GO:0046686">
    <property type="term" value="P:response to cadmium ion"/>
    <property type="evidence" value="ECO:0000270"/>
    <property type="project" value="RGD"/>
</dbReference>
<dbReference type="GO" id="GO:0034097">
    <property type="term" value="P:response to cytokine"/>
    <property type="evidence" value="ECO:0000314"/>
    <property type="project" value="RGD"/>
</dbReference>
<dbReference type="GO" id="GO:0032355">
    <property type="term" value="P:response to estradiol"/>
    <property type="evidence" value="ECO:0000270"/>
    <property type="project" value="RGD"/>
</dbReference>
<dbReference type="GO" id="GO:0043627">
    <property type="term" value="P:response to estrogen"/>
    <property type="evidence" value="ECO:0000314"/>
    <property type="project" value="RGD"/>
</dbReference>
<dbReference type="GO" id="GO:0009725">
    <property type="term" value="P:response to hormone"/>
    <property type="evidence" value="ECO:0000270"/>
    <property type="project" value="RGD"/>
</dbReference>
<dbReference type="GO" id="GO:0009410">
    <property type="term" value="P:response to xenobiotic stimulus"/>
    <property type="evidence" value="ECO:0000266"/>
    <property type="project" value="RGD"/>
</dbReference>
<dbReference type="GO" id="GO:0014010">
    <property type="term" value="P:Schwann cell proliferation"/>
    <property type="evidence" value="ECO:0000315"/>
    <property type="project" value="RGD"/>
</dbReference>
<dbReference type="GO" id="GO:0001501">
    <property type="term" value="P:skeletal system development"/>
    <property type="evidence" value="ECO:0000266"/>
    <property type="project" value="RGD"/>
</dbReference>
<dbReference type="GO" id="GO:0043588">
    <property type="term" value="P:skin development"/>
    <property type="evidence" value="ECO:0000266"/>
    <property type="project" value="RGD"/>
</dbReference>
<dbReference type="GO" id="GO:0051145">
    <property type="term" value="P:smooth muscle cell differentiation"/>
    <property type="evidence" value="ECO:0000266"/>
    <property type="project" value="RGD"/>
</dbReference>
<dbReference type="GO" id="GO:0072089">
    <property type="term" value="P:stem cell proliferation"/>
    <property type="evidence" value="ECO:0000266"/>
    <property type="project" value="RGD"/>
</dbReference>
<dbReference type="GO" id="GO:0061549">
    <property type="term" value="P:sympathetic ganglion development"/>
    <property type="evidence" value="ECO:0000250"/>
    <property type="project" value="UniProtKB"/>
</dbReference>
<dbReference type="GO" id="GO:0050808">
    <property type="term" value="P:synapse organization"/>
    <property type="evidence" value="ECO:0000266"/>
    <property type="project" value="RGD"/>
</dbReference>
<dbReference type="GO" id="GO:0097091">
    <property type="term" value="P:synaptic vesicle clustering"/>
    <property type="evidence" value="ECO:0000266"/>
    <property type="project" value="RGD"/>
</dbReference>
<dbReference type="GO" id="GO:0048489">
    <property type="term" value="P:synaptic vesicle transport"/>
    <property type="evidence" value="ECO:0000266"/>
    <property type="project" value="RGD"/>
</dbReference>
<dbReference type="GO" id="GO:0030217">
    <property type="term" value="P:T cell differentiation"/>
    <property type="evidence" value="ECO:0000266"/>
    <property type="project" value="RGD"/>
</dbReference>
<dbReference type="GO" id="GO:0033077">
    <property type="term" value="P:T cell differentiation in thymus"/>
    <property type="evidence" value="ECO:0000266"/>
    <property type="project" value="RGD"/>
</dbReference>
<dbReference type="GO" id="GO:0048538">
    <property type="term" value="P:thymus development"/>
    <property type="evidence" value="ECO:0000266"/>
    <property type="project" value="RGD"/>
</dbReference>
<dbReference type="GO" id="GO:0001894">
    <property type="term" value="P:tissue homeostasis"/>
    <property type="evidence" value="ECO:0000266"/>
    <property type="project" value="RGD"/>
</dbReference>
<dbReference type="GO" id="GO:0060440">
    <property type="term" value="P:trachea formation"/>
    <property type="evidence" value="ECO:0000266"/>
    <property type="project" value="RGD"/>
</dbReference>
<dbReference type="GO" id="GO:0060439">
    <property type="term" value="P:trachea morphogenesis"/>
    <property type="evidence" value="ECO:0000266"/>
    <property type="project" value="RGD"/>
</dbReference>
<dbReference type="GO" id="GO:0006366">
    <property type="term" value="P:transcription by RNA polymerase II"/>
    <property type="evidence" value="ECO:0000266"/>
    <property type="project" value="RGD"/>
</dbReference>
<dbReference type="GO" id="GO:0001944">
    <property type="term" value="P:vasculature development"/>
    <property type="evidence" value="ECO:0000266"/>
    <property type="project" value="RGD"/>
</dbReference>
<dbReference type="GO" id="GO:0001570">
    <property type="term" value="P:vasculogenesis"/>
    <property type="evidence" value="ECO:0000266"/>
    <property type="project" value="RGD"/>
</dbReference>
<dbReference type="CDD" id="cd21724">
    <property type="entry name" value="CTNNAbd_CTNNB1"/>
    <property type="match status" value="1"/>
</dbReference>
<dbReference type="FunFam" id="1.25.10.10:FF:000015">
    <property type="entry name" value="Catenin beta-1"/>
    <property type="match status" value="1"/>
</dbReference>
<dbReference type="Gene3D" id="1.25.10.10">
    <property type="entry name" value="Leucine-rich Repeat Variant"/>
    <property type="match status" value="1"/>
</dbReference>
<dbReference type="InterPro" id="IPR011989">
    <property type="entry name" value="ARM-like"/>
</dbReference>
<dbReference type="InterPro" id="IPR016024">
    <property type="entry name" value="ARM-type_fold"/>
</dbReference>
<dbReference type="InterPro" id="IPR000225">
    <property type="entry name" value="Armadillo"/>
</dbReference>
<dbReference type="InterPro" id="IPR013284">
    <property type="entry name" value="Beta-catenin"/>
</dbReference>
<dbReference type="PANTHER" id="PTHR45976">
    <property type="entry name" value="ARMADILLO SEGMENT POLARITY PROTEIN"/>
    <property type="match status" value="1"/>
</dbReference>
<dbReference type="Pfam" id="PF00514">
    <property type="entry name" value="Arm"/>
    <property type="match status" value="4"/>
</dbReference>
<dbReference type="PRINTS" id="PR01869">
    <property type="entry name" value="BCATNINFAMLY"/>
</dbReference>
<dbReference type="SMART" id="SM00185">
    <property type="entry name" value="ARM"/>
    <property type="match status" value="12"/>
</dbReference>
<dbReference type="SUPFAM" id="SSF48371">
    <property type="entry name" value="ARM repeat"/>
    <property type="match status" value="1"/>
</dbReference>
<dbReference type="PROSITE" id="PS50176">
    <property type="entry name" value="ARM_REPEAT"/>
    <property type="match status" value="9"/>
</dbReference>
<sequence length="781" mass="85455">MATQADLMELDMAMEPDRKAAVSHWQQQSYLDSGIHSGATTTAPSLSGKGNPEEEDVDTSQVLYEWEQGFSQSFTQEQVADIDGQYAMTRAQRVRAAMFPETLDEGMQIPSTQFDAAHPTNVQRLAEPSQMLKHAVVNLINYQDDAELATRAIPELTKLLNDEDQVVVNKAAVMVHQLSKKEASRHAIMRSPQMVSAIVRTMQNTNDVETARCTAGTLHNLSHHREGLLAIFKSGGIPALVKMLGSPVDSVLFYAITTLHNLLLHQEGAKMAVRLAGGLQKMVALLNKTNVKFLAITTDCLQILAYGNQESKLIILASGGPQALVNIMRTYTYEKLLWTTSRVLKVLSVCSSNKPAIVEAGGMQALGPHLTDPSQRLVQNCLWTLRNLSDAATKQEGMEGLLGTLVQLLGSDDINVVTCAAGILSNLTCNNYKNKMMVCQVGGIEALVRTVLRAGDREDITEPAICALRHLTSRHQEAEMAQNAVRLHYGLPVVVKLLHPPSHWPLIKATVGLIRNLALCPANHAPLREQGAIPRLVQLLVRAHQDTQRRTSMGGTQQQFVEGVRMEEIVEGCTGALHILARDVHNRIVIRGLNTIPLFVQLLYSPIENIQRVAAGVLCELAQDKEAAEAIEAEGATAPLTELLHSRNEGVATYAAAVLFRMSEDKPQDYKKRLSVELTSSLFRTEPMAWNETADLGLDIGAQGEALGYRQDDPSYRSFHSGGYGQDALGMDPMMEHEMGGHHPGADYPVDGLPDLGHAQDLMDGLPPGDSNQLAWFDTDL</sequence>
<reference key="1">
    <citation type="journal article" date="1999" name="J. Cell. Physiol.">
        <title>Study on the formation of specialized inter-Sertoli cell junctions in vitro.</title>
        <authorList>
            <person name="Chung S.S.W."/>
            <person name="Lee W.M."/>
            <person name="Cheng C.Y."/>
        </authorList>
    </citation>
    <scope>NUCLEOTIDE SEQUENCE [MRNA]</scope>
    <source>
        <strain>Sprague-Dawley</strain>
        <tissue>Testis</tissue>
    </source>
</reference>
<reference key="2">
    <citation type="journal article" date="2002" name="Gene">
        <title>Sequencing of the rat beta-catenin gene (Ctnnb1) and mutational analysis of liver tumors induced by 2-amino-3-methylimidazo[4,5-f]quinoline.</title>
        <authorList>
            <person name="Li Q."/>
            <person name="Dixon B.M."/>
            <person name="Al-Fageeh M."/>
            <person name="Blum C.A."/>
            <person name="Dashwood R.H."/>
        </authorList>
    </citation>
    <scope>NUCLEOTIDE SEQUENCE [GENOMIC DNA]</scope>
    <source>
        <strain>Fischer 344</strain>
    </source>
</reference>
<reference key="3">
    <citation type="journal article" date="2006" name="Genes Dev.">
        <title>The role of microtubule actin cross-linking factor 1 (MACF1) in the Wnt signaling pathway.</title>
        <authorList>
            <person name="Chen H.J."/>
            <person name="Lin C.M."/>
            <person name="Lin C.S."/>
            <person name="Perez-Olle R."/>
            <person name="Leung C.L."/>
            <person name="Liem R.K."/>
        </authorList>
    </citation>
    <scope>SUBCELLULAR LOCATION</scope>
    <scope>IDENTIFICATION IN A COMPLEX WITH MACF1; APC; AXIN1 AND GSK3B</scope>
</reference>
<reference key="4">
    <citation type="journal article" date="2006" name="J. Cell Biol.">
        <title>The Fat1 cadherin integrates vascular smooth muscle cell growth and migration signals.</title>
        <authorList>
            <person name="Hou R."/>
            <person name="Liu L."/>
            <person name="Anees S."/>
            <person name="Hiroyasu S."/>
            <person name="Sibinga N.E."/>
        </authorList>
    </citation>
    <scope>INTERACTION WITH FAT1</scope>
</reference>
<reference key="5">
    <citation type="journal article" date="2000" name="J. Biol. Chem.">
        <title>A novel beta-catenin-binding protein inhibits beta-catenin-dependent Tcf activation and axis formation.</title>
        <authorList>
            <person name="Sakamoto I."/>
            <person name="Kishida S."/>
            <person name="Fukui A."/>
            <person name="Kishida M."/>
            <person name="Yamamoto H."/>
            <person name="Hino S."/>
            <person name="Michiue T."/>
            <person name="Takada S."/>
            <person name="Asashima M."/>
            <person name="Kikuchi A."/>
        </authorList>
    </citation>
    <scope>INTERACTION WITH CHD8</scope>
</reference>
<reference key="6">
    <citation type="journal article" date="2006" name="Proc. Natl. Acad. Sci. U.S.A.">
        <title>Quantitative phosphoproteomics of vasopressin-sensitive renal cells: regulation of aquaporin-2 phosphorylation at two sites.</title>
        <authorList>
            <person name="Hoffert J.D."/>
            <person name="Pisitkun T."/>
            <person name="Wang G."/>
            <person name="Shen R.-F."/>
            <person name="Knepper M.A."/>
        </authorList>
    </citation>
    <scope>PHOSPHORYLATION [LARGE SCALE ANALYSIS] AT SER-675</scope>
    <scope>IDENTIFICATION BY MASS SPECTROMETRY [LARGE SCALE ANALYSIS]</scope>
</reference>
<reference key="7">
    <citation type="journal article" date="2012" name="Nat. Commun.">
        <title>Quantitative maps of protein phosphorylation sites across 14 different rat organs and tissues.</title>
        <authorList>
            <person name="Lundby A."/>
            <person name="Secher A."/>
            <person name="Lage K."/>
            <person name="Nordsborg N.B."/>
            <person name="Dmytriyev A."/>
            <person name="Lundby C."/>
            <person name="Olsen J.V."/>
        </authorList>
    </citation>
    <scope>PHOSPHORYLATION [LARGE SCALE ANALYSIS] AT SER-191; SER-552 AND SER-675</scope>
    <scope>IDENTIFICATION BY MASS SPECTROMETRY [LARGE SCALE ANALYSIS]</scope>
</reference>
<evidence type="ECO:0000250" key="1"/>
<evidence type="ECO:0000250" key="2">
    <source>
        <dbReference type="UniProtKB" id="B6V8E6"/>
    </source>
</evidence>
<evidence type="ECO:0000250" key="3">
    <source>
        <dbReference type="UniProtKB" id="P35222"/>
    </source>
</evidence>
<evidence type="ECO:0000250" key="4">
    <source>
        <dbReference type="UniProtKB" id="Q02248"/>
    </source>
</evidence>
<evidence type="ECO:0000250" key="5">
    <source>
        <dbReference type="UniProtKB" id="Q96S06"/>
    </source>
</evidence>
<evidence type="ECO:0000256" key="6">
    <source>
        <dbReference type="SAM" id="MobiDB-lite"/>
    </source>
</evidence>
<evidence type="ECO:0000269" key="7">
    <source>
    </source>
</evidence>
<evidence type="ECO:0000269" key="8">
    <source>
    </source>
</evidence>
<evidence type="ECO:0000269" key="9">
    <source>
    </source>
</evidence>
<evidence type="ECO:0000303" key="10">
    <source>
    </source>
</evidence>
<evidence type="ECO:0000305" key="11"/>
<evidence type="ECO:0000312" key="12">
    <source>
        <dbReference type="RGD" id="70487"/>
    </source>
</evidence>
<evidence type="ECO:0007744" key="13">
    <source>
    </source>
</evidence>
<evidence type="ECO:0007744" key="14">
    <source>
    </source>
</evidence>
<proteinExistence type="evidence at protein level"/>
<accession>Q9WU82</accession>
<keyword id="KW-0007">Acetylation</keyword>
<keyword id="KW-0010">Activator</keyword>
<keyword id="KW-0130">Cell adhesion</keyword>
<keyword id="KW-0965">Cell junction</keyword>
<keyword id="KW-1003">Cell membrane</keyword>
<keyword id="KW-0966">Cell projection</keyword>
<keyword id="KW-0963">Cytoplasm</keyword>
<keyword id="KW-0206">Cytoskeleton</keyword>
<keyword id="KW-0325">Glycoprotein</keyword>
<keyword id="KW-0472">Membrane</keyword>
<keyword id="KW-0524">Neurogenesis</keyword>
<keyword id="KW-0539">Nucleus</keyword>
<keyword id="KW-0597">Phosphoprotein</keyword>
<keyword id="KW-1185">Reference proteome</keyword>
<keyword id="KW-0677">Repeat</keyword>
<keyword id="KW-0702">S-nitrosylation</keyword>
<keyword id="KW-0770">Synapse</keyword>
<keyword id="KW-0804">Transcription</keyword>
<keyword id="KW-0805">Transcription regulation</keyword>
<keyword id="KW-0832">Ubl conjugation</keyword>
<comment type="function">
    <text evidence="3 4">Key downstream component of the canonical Wnt signaling pathway (By similarity). In the absence of Wnt, forms a complex with AXIN1, AXIN2, APC, CSNK1A1 and GSK3B that promotes phosphorylation on N-terminal Ser and Thr residues and ubiquitination of CTNNB1 via BTRC and its subsequent degradation by the proteasome. In the presence of Wnt ligand, CTNNB1 is not ubiquitinated and accumulates in the nucleus, where it acts as a coactivator for transcription factors of the TCF/LEF family, leading to activate Wnt responsive genes (By similarity). Also acts as a coactivator for other transcription factors, such as NR5A2 (By similarity). Promotes epithelial to mesenchymal transition/mesenchymal to epithelial transition (EMT/MET) via driving transcription of CTNNB1/TCF-target genes (By similarity). Involved in the regulation of cell adhesion, as component of an E-cadherin:catenin adhesion complex (By similarity). Acts as a negative regulator of centrosome cohesion. Involved in the CDK2/PTPN6/CTNNB1/CEACAM1 pathway of insulin internalization. Blocks anoikis of malignant kidney and intestinal epithelial cells and promotes their anchorage-independent growth by down-regulating DAPK2. Disrupts PML function and PML-NB formation by inhibiting RANBP2-mediated sumoylation of PML (By similarity). Promotes neurogenesis by maintaining sympathetic neuroblasts within the cell cycle. Involved in chondrocyte differentiation via interaction with SOX9: SOX9-binding competes with the binding sites of TCF/LEF within CTNNB1, thereby inhibiting the Wnt signaling (By similarity). Acts as a positive regulator of odontoblast differentiation during mesenchymal tooth germ formation, via promoting the transcription of differentiation factors such as LEF1, BMP2 and BMP4 (By similarity). Activity is repressed in a MSX1-mediated manner at the bell stage of mesenchymal tooth germ formation which prevents premature differentiation of odontoblasts (By similarity).</text>
</comment>
<comment type="subunit">
    <text evidence="3 4 7 8 9">Two separate complex-associated pools are found in the cytoplasm. The majority is present as component of an E-cadherin/ catenin adhesion complex composed of at least E-cadherin/CDH1 and beta-catenin/CTNNB1, and possibly alpha-catenin/CTNNA1; the complex is located to adherens junctions. The stable association of CTNNA1 is controversial as CTNNA1 was shown not to bind to F-actin when assembled in the complex. Alternatively, the CTNNA1-containing complex may be linked to F-actin by other proteins such as LIMA1. Another cytoplasmic pool is part of a large complex containing AXIN1, AXIN2, APC, CSNK1A1 and GSK3B that promotes phosphorylation on N-terminal Ser and Thr residues and ubiquitination of CTNNB1. Interacts directly with AXIN1; the interaction is regulated by CK2 via BTRC and its subsequent degradation by the proteasome. Interacts directly with AXIN1; the interaction is regulated by CDK2 phosphorylation. Wnt-dependent activation of DVL antagonizes the action of GSK3B. When GSK3B activity is inhibited the complex dissociates, CTNNB1 is dephosphorylated and is no longer targeted for destruction. The stabilized protein translocates to the nucleus, where it binds TCF/LEF-1 family members, BCL9, BCL9L and possibly also RUVBL1 and CHD8. Binds CTNNBIP and EP300. CTNNB1 forms a ternary complex with LEF1 and EP300 that is disrupted by CTNNBIP1 binding. Interacts with TAX1BP3 (via the PDZ domain); this interaction inhibits the transcriptional activity of CTNNB1. Interacts with AJAP1, BAIAP1, CARM1, CTNNA3, CXADR and PCDH11Y. Binds NHERF1. Interacts with GLIS2. Interacts with XIRP1. Interacts with PTPRU (via the cytoplasmic juxtamembrane domain) and with SLC30A9. Interacts with EMD. Interacts with SCRIB. Interacts with TNIK and TCF7L2. Interacts with SESTD1 and TRPC4. Interacts directly with AXIN1; the interaction is regulated by CDK2 phosphorylation of AXIN1. Interacts with CAV1. Interacts with TRPV4. The TRPV4 and CTNNB1 complex can interact with CDH1. Interacts with VCL. Interacts with PTPRJ. Interacts with PKT7. Interacts with NANOS1. Interacts with CDK2, NDRG2, NEK2 and CDK5. Found in a complex composed of MACF1, APC, AXIN1, CTNNB1 and GSK3B. Interacts with PTK6. Interacts with SOX7; this interaction may lead to proteasomal degradation of active CTNNB1 and thus inhibition of Wnt/beta-catenin-stimulated transcription. Identified in a complex with HINT1 and MITF. Interacts with FHIT. The CTNNB1 and TCF4 complex interacts with PML. Interacts with FERMT2. Identified in a complex with TCF4 and FERMT2. Interacts with RAPGEF2. Interacts with FAT1 (via the cytoplasmic domain). Interacts with RORA. May interact with P-cadherin/CDH3. Interacts with RNF220 (By similarity). Interacts with CTNND2 (By similarity). Interacts (via the C-terminal region) with CBY1 (By similarity). The complex composed, at least, of APC, CTNNB1 and GSK3B interacts with JPT1; the interaction requires the inactive form of GSK3B (phosphorylated at 'Ser-9'). Interacts with DLG5 (By similarity). Interacts with FAM53B; promoting translocation to the nucleus. Interacts with TMEM170B (By similarity). Interacts with AHI1 (By similarity). Interacts with GID8 (By similarity). Component of an cadherin:catenin adhesion complex composed of at least of CDH26, beta-catenin/CTNNB1, alpha-catenin/CTNNA1 and p120 catenin/CTNND1 (By similarity). Forms a complex comprising APPL1, RUVBL2, APPL2, HDAC1 and HDAC2 (By similarity). Interacts with IRF2BPL; mediates the ubiquitination and degradation of CTNNB1 (By similarity). Interacts with AMFR (By similarity). Interacts with LMBR1L (By similarity). Interacts with SOX30; prevents interaction of CTNNB1 with TCF7L2/TCF4 and leads to inhibition of Wnt signaling (By similarity). Interacts with SOX9; inhibiting CTNNB1 activity by competing with the binding sites of TCF/LEF within CTNNB1, thereby inhibiting the Wnt signaling (By similarity). Interacts with SPN/CD43 cytoplasmic tail (By similarity). Interacts (when phosphorylated at Tyr-333) with isoform M2 of PKM (PKM2); promoting transcription activation (By similarity). Interacts with PKP2 (via HEAD domain) (By similarity). Interacts with CDH1 (By similarity). Interacts (when unphosphorylated) with FLYWCH1, perhaps preventing interaction of CTNNB1 with TCF4, and thereby regulating transcription activation; phosphorylation of CTNNB1 may inhibit the interaction (By similarity). Interacts (via the central armadillo domains) with probable transcriptional regulator ADNP (via N-terminal region); interaction is direct and stabilizes CTNNB1 by modulating its phosphorylation by glycogen synthase kinase-3 beta GSK3B (By similarity). Interacts with NR5A2 (By similarity). Interacts with DSG2; the interaction promotes localization of CTNNB1 at cell junctions thus reducing its nuclear localization and subsequent transcription of CTNNB1/TCF-target genes (By similarity).</text>
</comment>
<comment type="subcellular location">
    <subcellularLocation>
        <location evidence="9">Cytoplasm</location>
    </subcellularLocation>
    <subcellularLocation>
        <location evidence="9">Nucleus</location>
    </subcellularLocation>
    <subcellularLocation>
        <location evidence="9">Cytoplasm</location>
        <location evidence="9">Cytoskeleton</location>
    </subcellularLocation>
    <subcellularLocation>
        <location evidence="4">Cell junction</location>
        <location evidence="4">Adherens junction</location>
    </subcellularLocation>
    <subcellularLocation>
        <location evidence="2">Cell junction</location>
    </subcellularLocation>
    <subcellularLocation>
        <location evidence="9">Cell membrane</location>
    </subcellularLocation>
    <subcellularLocation>
        <location evidence="3">Cytoplasm</location>
        <location evidence="3">Cytoskeleton</location>
        <location evidence="3">Microtubule organizing center</location>
        <location evidence="3">Centrosome</location>
    </subcellularLocation>
    <subcellularLocation>
        <location evidence="3">Cytoplasm</location>
        <location evidence="3">Cytoskeleton</location>
        <location evidence="3">Spindle pole</location>
    </subcellularLocation>
    <subcellularLocation>
        <location evidence="4">Synapse</location>
    </subcellularLocation>
    <subcellularLocation>
        <location evidence="4">Cytoplasm</location>
        <location evidence="4">Cytoskeleton</location>
        <location evidence="4">Cilium basal body</location>
    </subcellularLocation>
    <text evidence="2 3 4">Colocalized with RAPGEF2 and TJP1 at cell-cell contacts (By similarity). Cytoplasmic when it is un-stable (highly phosphorylated) or bound to CDH1. Translocates to the nucleus when it is stabilized (low level of phosphorylation). Interaction with GLIS2 and MUC1 promotes nuclear translocation. Interaction with EMD inhibits nuclear localization. The majority of CTNNB1 is localized to the cell membrane. In interphase, colocalizes with CROCC between CEP250 puncta at the proximal end of centrioles, and this localization is dependent on CROCC and CEP250. In mitosis, when NEK2 activity increases, it localizes to centrosomes at spindle poles independent of CROCC. Colocalizes with CDK5 in the cell-cell contacts and plasma membrane of undifferentiated and differentiated neuroblastoma cells. Interaction with FAM53B promotes translocation to the nucleus (By similarity). Translocates to the nucleus in the presence of SNAIL1 (By similarity). Ca(2+)-mediated localization to the cell membrane in dental epithelial cells is inhibited via WNT3A (By similarity). Localizes to cell-cell contacts as keratinocyte differentiation progresses (By similarity).</text>
</comment>
<comment type="tissue specificity">
    <text>Expressed in the testis.</text>
</comment>
<comment type="developmental stage">
    <text>Highly expressed at 30 dpc to 60 dpc in the testis. Reduced expression at 90 dpc.</text>
</comment>
<comment type="PTM">
    <text evidence="3 4">Phosphorylation by GSK3B requires prior phosphorylation of Ser-45 by another kinase. Phosphorylation proceeds then from Thr-41 to Ser-33. Phosphorylated by NEK2. EGF stimulates tyrosine phosphorylation. Phosphorylated on Ser-33 and Ser-37 by HIPK2. This phosphorylation triggers proteasomal degradation. Phosphorylation at Ser-552 by AMPK promotes stabilization of the protein, enhancing TCF/LEF-mediated transcription. Phosphorylation on Ser-191 and Ser-246 by CDK5. Phosphorylation by CDK2 regulates insulin internalization. Phosphorylation by PTK6 at Tyr-64, Tyr-142, Tyr-331 and/or Tyr-333 with the predominant site at Tyr-64 is not essential for inhibition of transcriptional activity. Phosphorylation by SRC at Tyr-333 promotes interaction with isoform M2 of PKM (PKM2); promoting transcription activation.</text>
</comment>
<comment type="PTM">
    <text evidence="3 4">Ubiquitinated by the SCF(BTRC) E3 ligase complex when phosphorylated by GSK3B, leading to its degradation. Ubiquitinated by a E3 ubiquitin ligase complex containing UBE2D1, SIAH1, CACYBP/SIP, SKP1, APC and TBL1X, leading to its subsequent proteasomal degradation (By similarity). Ubiquitinated and degraded following interaction with SOX9 (By similarity). Ubiquitinated via 'Lys-11'- and 'Lys-29'-linked ubiquitin chains by UBR5, leading to its stabilization (By similarity).</text>
</comment>
<comment type="PTM">
    <text evidence="1">S-nitrosylation at Cys-619 within adherens junctions promotes VEGF-induced, NO-dependent endothelial cell permeability by disrupting interaction with E-cadherin, thus mediating disassembly adherens junctions.</text>
</comment>
<comment type="PTM">
    <text evidence="5">O-glycosylation at Ser-23 decreases nuclear localization and transcriptional activity, and increases localization to the plasma membrane and interaction with E-cadherin CDH1.</text>
</comment>
<comment type="PTM">
    <text evidence="3">Deacetylated at Lys-49 by SIRT1.</text>
</comment>
<comment type="similarity">
    <text evidence="11">Belongs to the beta-catenin family.</text>
</comment>
<organism>
    <name type="scientific">Rattus norvegicus</name>
    <name type="common">Rat</name>
    <dbReference type="NCBI Taxonomy" id="10116"/>
    <lineage>
        <taxon>Eukaryota</taxon>
        <taxon>Metazoa</taxon>
        <taxon>Chordata</taxon>
        <taxon>Craniata</taxon>
        <taxon>Vertebrata</taxon>
        <taxon>Euteleostomi</taxon>
        <taxon>Mammalia</taxon>
        <taxon>Eutheria</taxon>
        <taxon>Euarchontoglires</taxon>
        <taxon>Glires</taxon>
        <taxon>Rodentia</taxon>
        <taxon>Myomorpha</taxon>
        <taxon>Muroidea</taxon>
        <taxon>Muridae</taxon>
        <taxon>Murinae</taxon>
        <taxon>Rattus</taxon>
    </lineage>
</organism>
<gene>
    <name evidence="12" type="primary">Ctnnb1</name>
    <name evidence="12" type="synonym">Catnb</name>
</gene>
<protein>
    <recommendedName>
        <fullName evidence="12">Catenin beta-1</fullName>
    </recommendedName>
    <alternativeName>
        <fullName evidence="10">Beta-catenin</fullName>
    </alternativeName>
</protein>